<comment type="subunit">
    <text evidence="6">Homodimer.</text>
</comment>
<comment type="subcellular location">
    <subcellularLocation>
        <location evidence="2">Nucleus</location>
    </subcellularLocation>
</comment>
<comment type="alternative products">
    <event type="alternative splicing"/>
    <isoform>
        <id>Q9SVU6-1</id>
        <name>1</name>
        <sequence type="displayed"/>
    </isoform>
    <isoform>
        <id>Q9SVU6-2</id>
        <name>2</name>
        <sequence type="described" ref="VSP_036077 VSP_036078"/>
    </isoform>
    <isoform>
        <id>Q9SVU6-3</id>
        <name>3</name>
        <sequence type="described" ref="VSP_036079 VSP_036080"/>
    </isoform>
</comment>
<comment type="tissue specificity">
    <text evidence="4">Expressed constitutively in leaves, stems, and flowers.</text>
</comment>
<sequence length="413" mass="46070">MTWKPKMLILSHDLISPEKYIMGEDDIVELLGKSSQVVTSSQTQTPSCDPPLILRGSGSGDGEGNGPLPQPPPPLYHQQSLFIQEDEMASWLHQPNRQDYLYSQLLYSGVASTHPQSLASLEPPPPPRAQYILAADRPTGHILAERRAENFMNISRQRGNIFLGGVEAVPSNSTLLSSATESIPATHGTESRATVTGGVSRTFAVPGLGPRGKAVAIETAGTQSWGLCKAETEPVQRQPATETDITDERKRKTREETNVENQGTEEARDSTSSKRSRAAIMHKLSERRRRQKINEMMKALQELLPRCTKTDRSSMLDDVIEYVKSLQSQIQMFSMGHVMIPPMMYAGNIQQQYMPHMAMGMNRPPAFIPFPRQAHMAEGVGPVDLFRENEETEQETMSLLLREDKRTKQKMFS</sequence>
<name>BH023_ARATH</name>
<accession>Q9SVU6</accession>
<accession>Q5XEY8</accession>
<organism>
    <name type="scientific">Arabidopsis thaliana</name>
    <name type="common">Mouse-ear cress</name>
    <dbReference type="NCBI Taxonomy" id="3702"/>
    <lineage>
        <taxon>Eukaryota</taxon>
        <taxon>Viridiplantae</taxon>
        <taxon>Streptophyta</taxon>
        <taxon>Embryophyta</taxon>
        <taxon>Tracheophyta</taxon>
        <taxon>Spermatophyta</taxon>
        <taxon>Magnoliopsida</taxon>
        <taxon>eudicotyledons</taxon>
        <taxon>Gunneridae</taxon>
        <taxon>Pentapetalae</taxon>
        <taxon>rosids</taxon>
        <taxon>malvids</taxon>
        <taxon>Brassicales</taxon>
        <taxon>Brassicaceae</taxon>
        <taxon>Camelineae</taxon>
        <taxon>Arabidopsis</taxon>
    </lineage>
</organism>
<feature type="chain" id="PRO_0000358735" description="Transcription factor bHLH23">
    <location>
        <begin position="1"/>
        <end position="413"/>
    </location>
</feature>
<feature type="domain" description="bHLH" evidence="2">
    <location>
        <begin position="277"/>
        <end position="326"/>
    </location>
</feature>
<feature type="region of interest" description="Disordered" evidence="3">
    <location>
        <begin position="40"/>
        <end position="75"/>
    </location>
</feature>
<feature type="region of interest" description="Disordered" evidence="3">
    <location>
        <begin position="232"/>
        <end position="278"/>
    </location>
</feature>
<feature type="region of interest" description="Disordered" evidence="3">
    <location>
        <begin position="391"/>
        <end position="413"/>
    </location>
</feature>
<feature type="compositionally biased region" description="Basic and acidic residues" evidence="3">
    <location>
        <begin position="246"/>
        <end position="257"/>
    </location>
</feature>
<feature type="modified residue" description="Phosphothreonine" evidence="1">
    <location>
        <position position="186"/>
    </location>
</feature>
<feature type="modified residue" description="Phosphoserine" evidence="1">
    <location>
        <position position="191"/>
    </location>
</feature>
<feature type="splice variant" id="VSP_036077" description="In isoform 2." evidence="5">
    <original>SRAAIMHK</original>
    <variation>DGDKRLTR</variation>
    <location>
        <begin position="276"/>
        <end position="283"/>
    </location>
</feature>
<feature type="splice variant" id="VSP_036078" description="In isoform 2." evidence="5">
    <location>
        <begin position="284"/>
        <end position="413"/>
    </location>
</feature>
<feature type="splice variant" id="VSP_036079" description="In isoform 3." evidence="6">
    <original>MFSMGHVMI</original>
    <variation>GKHLRIFRS</variation>
    <location>
        <begin position="332"/>
        <end position="340"/>
    </location>
</feature>
<feature type="splice variant" id="VSP_036080" description="In isoform 3." evidence="6">
    <location>
        <begin position="341"/>
        <end position="413"/>
    </location>
</feature>
<keyword id="KW-0025">Alternative splicing</keyword>
<keyword id="KW-0238">DNA-binding</keyword>
<keyword id="KW-0539">Nucleus</keyword>
<keyword id="KW-0597">Phosphoprotein</keyword>
<keyword id="KW-1185">Reference proteome</keyword>
<keyword id="KW-0804">Transcription</keyword>
<keyword id="KW-0805">Transcription regulation</keyword>
<evidence type="ECO:0000250" key="1">
    <source>
        <dbReference type="UniProtKB" id="Q8GZM7"/>
    </source>
</evidence>
<evidence type="ECO:0000255" key="2">
    <source>
        <dbReference type="PROSITE-ProRule" id="PRU00981"/>
    </source>
</evidence>
<evidence type="ECO:0000256" key="3">
    <source>
        <dbReference type="SAM" id="MobiDB-lite"/>
    </source>
</evidence>
<evidence type="ECO:0000269" key="4">
    <source>
    </source>
</evidence>
<evidence type="ECO:0000303" key="5">
    <source ref="3"/>
</evidence>
<evidence type="ECO:0000305" key="6"/>
<proteinExistence type="evidence at transcript level"/>
<reference key="1">
    <citation type="journal article" date="1999" name="Nature">
        <title>Sequence and analysis of chromosome 4 of the plant Arabidopsis thaliana.</title>
        <authorList>
            <person name="Mayer K.F.X."/>
            <person name="Schueller C."/>
            <person name="Wambutt R."/>
            <person name="Murphy G."/>
            <person name="Volckaert G."/>
            <person name="Pohl T."/>
            <person name="Duesterhoeft A."/>
            <person name="Stiekema W."/>
            <person name="Entian K.-D."/>
            <person name="Terryn N."/>
            <person name="Harris B."/>
            <person name="Ansorge W."/>
            <person name="Brandt P."/>
            <person name="Grivell L.A."/>
            <person name="Rieger M."/>
            <person name="Weichselgartner M."/>
            <person name="de Simone V."/>
            <person name="Obermaier B."/>
            <person name="Mache R."/>
            <person name="Mueller M."/>
            <person name="Kreis M."/>
            <person name="Delseny M."/>
            <person name="Puigdomenech P."/>
            <person name="Watson M."/>
            <person name="Schmidtheini T."/>
            <person name="Reichert B."/>
            <person name="Portetelle D."/>
            <person name="Perez-Alonso M."/>
            <person name="Boutry M."/>
            <person name="Bancroft I."/>
            <person name="Vos P."/>
            <person name="Hoheisel J."/>
            <person name="Zimmermann W."/>
            <person name="Wedler H."/>
            <person name="Ridley P."/>
            <person name="Langham S.-A."/>
            <person name="McCullagh B."/>
            <person name="Bilham L."/>
            <person name="Robben J."/>
            <person name="van der Schueren J."/>
            <person name="Grymonprez B."/>
            <person name="Chuang Y.-J."/>
            <person name="Vandenbussche F."/>
            <person name="Braeken M."/>
            <person name="Weltjens I."/>
            <person name="Voet M."/>
            <person name="Bastiaens I."/>
            <person name="Aert R."/>
            <person name="Defoor E."/>
            <person name="Weitzenegger T."/>
            <person name="Bothe G."/>
            <person name="Ramsperger U."/>
            <person name="Hilbert H."/>
            <person name="Braun M."/>
            <person name="Holzer E."/>
            <person name="Brandt A."/>
            <person name="Peters S."/>
            <person name="van Staveren M."/>
            <person name="Dirkse W."/>
            <person name="Mooijman P."/>
            <person name="Klein Lankhorst R."/>
            <person name="Rose M."/>
            <person name="Hauf J."/>
            <person name="Koetter P."/>
            <person name="Berneiser S."/>
            <person name="Hempel S."/>
            <person name="Feldpausch M."/>
            <person name="Lamberth S."/>
            <person name="Van den Daele H."/>
            <person name="De Keyser A."/>
            <person name="Buysshaert C."/>
            <person name="Gielen J."/>
            <person name="Villarroel R."/>
            <person name="De Clercq R."/>
            <person name="van Montagu M."/>
            <person name="Rogers J."/>
            <person name="Cronin A."/>
            <person name="Quail M.A."/>
            <person name="Bray-Allen S."/>
            <person name="Clark L."/>
            <person name="Doggett J."/>
            <person name="Hall S."/>
            <person name="Kay M."/>
            <person name="Lennard N."/>
            <person name="McLay K."/>
            <person name="Mayes R."/>
            <person name="Pettett A."/>
            <person name="Rajandream M.A."/>
            <person name="Lyne M."/>
            <person name="Benes V."/>
            <person name="Rechmann S."/>
            <person name="Borkova D."/>
            <person name="Bloecker H."/>
            <person name="Scharfe M."/>
            <person name="Grimm M."/>
            <person name="Loehnert T.-H."/>
            <person name="Dose S."/>
            <person name="de Haan M."/>
            <person name="Maarse A.C."/>
            <person name="Schaefer M."/>
            <person name="Mueller-Auer S."/>
            <person name="Gabel C."/>
            <person name="Fuchs M."/>
            <person name="Fartmann B."/>
            <person name="Granderath K."/>
            <person name="Dauner D."/>
            <person name="Herzl A."/>
            <person name="Neumann S."/>
            <person name="Argiriou A."/>
            <person name="Vitale D."/>
            <person name="Liguori R."/>
            <person name="Piravandi E."/>
            <person name="Massenet O."/>
            <person name="Quigley F."/>
            <person name="Clabauld G."/>
            <person name="Muendlein A."/>
            <person name="Felber R."/>
            <person name="Schnabl S."/>
            <person name="Hiller R."/>
            <person name="Schmidt W."/>
            <person name="Lecharny A."/>
            <person name="Aubourg S."/>
            <person name="Chefdor F."/>
            <person name="Cooke R."/>
            <person name="Berger C."/>
            <person name="Monfort A."/>
            <person name="Casacuberta E."/>
            <person name="Gibbons T."/>
            <person name="Weber N."/>
            <person name="Vandenbol M."/>
            <person name="Bargues M."/>
            <person name="Terol J."/>
            <person name="Torres A."/>
            <person name="Perez-Perez A."/>
            <person name="Purnelle B."/>
            <person name="Bent E."/>
            <person name="Johnson S."/>
            <person name="Tacon D."/>
            <person name="Jesse T."/>
            <person name="Heijnen L."/>
            <person name="Schwarz S."/>
            <person name="Scholler P."/>
            <person name="Heber S."/>
            <person name="Francs P."/>
            <person name="Bielke C."/>
            <person name="Frishman D."/>
            <person name="Haase D."/>
            <person name="Lemcke K."/>
            <person name="Mewes H.-W."/>
            <person name="Stocker S."/>
            <person name="Zaccaria P."/>
            <person name="Bevan M."/>
            <person name="Wilson R.K."/>
            <person name="de la Bastide M."/>
            <person name="Habermann K."/>
            <person name="Parnell L."/>
            <person name="Dedhia N."/>
            <person name="Gnoj L."/>
            <person name="Schutz K."/>
            <person name="Huang E."/>
            <person name="Spiegel L."/>
            <person name="Sekhon M."/>
            <person name="Murray J."/>
            <person name="Sheet P."/>
            <person name="Cordes M."/>
            <person name="Abu-Threideh J."/>
            <person name="Stoneking T."/>
            <person name="Kalicki J."/>
            <person name="Graves T."/>
            <person name="Harmon G."/>
            <person name="Edwards J."/>
            <person name="Latreille P."/>
            <person name="Courtney L."/>
            <person name="Cloud J."/>
            <person name="Abbott A."/>
            <person name="Scott K."/>
            <person name="Johnson D."/>
            <person name="Minx P."/>
            <person name="Bentley D."/>
            <person name="Fulton B."/>
            <person name="Miller N."/>
            <person name="Greco T."/>
            <person name="Kemp K."/>
            <person name="Kramer J."/>
            <person name="Fulton L."/>
            <person name="Mardis E."/>
            <person name="Dante M."/>
            <person name="Pepin K."/>
            <person name="Hillier L.W."/>
            <person name="Nelson J."/>
            <person name="Spieth J."/>
            <person name="Ryan E."/>
            <person name="Andrews S."/>
            <person name="Geisel C."/>
            <person name="Layman D."/>
            <person name="Du H."/>
            <person name="Ali J."/>
            <person name="Berghoff A."/>
            <person name="Jones K."/>
            <person name="Drone K."/>
            <person name="Cotton M."/>
            <person name="Joshu C."/>
            <person name="Antonoiu B."/>
            <person name="Zidanic M."/>
            <person name="Strong C."/>
            <person name="Sun H."/>
            <person name="Lamar B."/>
            <person name="Yordan C."/>
            <person name="Ma P."/>
            <person name="Zhong J."/>
            <person name="Preston R."/>
            <person name="Vil D."/>
            <person name="Shekher M."/>
            <person name="Matero A."/>
            <person name="Shah R."/>
            <person name="Swaby I.K."/>
            <person name="O'Shaughnessy A."/>
            <person name="Rodriguez M."/>
            <person name="Hoffman J."/>
            <person name="Till S."/>
            <person name="Granat S."/>
            <person name="Shohdy N."/>
            <person name="Hasegawa A."/>
            <person name="Hameed A."/>
            <person name="Lodhi M."/>
            <person name="Johnson A."/>
            <person name="Chen E."/>
            <person name="Marra M.A."/>
            <person name="Martienssen R."/>
            <person name="McCombie W.R."/>
        </authorList>
    </citation>
    <scope>NUCLEOTIDE SEQUENCE [LARGE SCALE GENOMIC DNA]</scope>
    <source>
        <strain>cv. Columbia</strain>
    </source>
</reference>
<reference key="2">
    <citation type="journal article" date="2017" name="Plant J.">
        <title>Araport11: a complete reannotation of the Arabidopsis thaliana reference genome.</title>
        <authorList>
            <person name="Cheng C.Y."/>
            <person name="Krishnakumar V."/>
            <person name="Chan A.P."/>
            <person name="Thibaud-Nissen F."/>
            <person name="Schobel S."/>
            <person name="Town C.D."/>
        </authorList>
    </citation>
    <scope>GENOME REANNOTATION</scope>
    <source>
        <strain>cv. Columbia</strain>
    </source>
</reference>
<reference key="3">
    <citation type="submission" date="2004-11" db="EMBL/GenBank/DDBJ databases">
        <title>Arabidopsis ORF clones.</title>
        <authorList>
            <person name="Shinn P."/>
            <person name="Chen H."/>
            <person name="Cheuk R.F."/>
            <person name="Kim C.J."/>
            <person name="Ecker J.R."/>
        </authorList>
    </citation>
    <scope>NUCLEOTIDE SEQUENCE [LARGE SCALE MRNA] (ISOFORM 2)</scope>
    <source>
        <strain>cv. Columbia</strain>
    </source>
</reference>
<reference key="4">
    <citation type="journal article" date="2003" name="Mol. Biol. Evol.">
        <title>The basic helix-loop-helix transcription factor family in plants: a genome-wide study of protein structure and functional diversity.</title>
        <authorList>
            <person name="Heim M.A."/>
            <person name="Jakoby M."/>
            <person name="Werber M."/>
            <person name="Martin C."/>
            <person name="Weisshaar B."/>
            <person name="Bailey P.C."/>
        </authorList>
    </citation>
    <scope>TISSUE SPECIFICITY</scope>
    <scope>GENE FAMILY</scope>
    <scope>NOMENCLATURE</scope>
</reference>
<reference key="5">
    <citation type="journal article" date="2003" name="Plant Cell">
        <title>The Arabidopsis basic/helix-loop-helix transcription factor family.</title>
        <authorList>
            <person name="Toledo-Ortiz G."/>
            <person name="Huq E."/>
            <person name="Quail P.H."/>
        </authorList>
    </citation>
    <scope>GENE FAMILY</scope>
</reference>
<reference key="6">
    <citation type="journal article" date="2003" name="Plant Cell">
        <title>Update on the basic helix-loop-helix transcription factor gene family in Arabidopsis thaliana.</title>
        <authorList>
            <person name="Bailey P.C."/>
            <person name="Martin C."/>
            <person name="Toledo-Ortiz G."/>
            <person name="Quail P.H."/>
            <person name="Huq E."/>
            <person name="Heim M.A."/>
            <person name="Jakoby M."/>
            <person name="Werber M."/>
            <person name="Weisshaar B."/>
        </authorList>
    </citation>
    <scope>GENE FAMILY</scope>
    <scope>NOMENCLATURE</scope>
</reference>
<protein>
    <recommendedName>
        <fullName>Transcription factor bHLH23</fullName>
    </recommendedName>
    <alternativeName>
        <fullName>Basic helix-loop-helix protein 23</fullName>
        <shortName>AtbHLH23</shortName>
        <shortName>bHLH 23</shortName>
    </alternativeName>
    <alternativeName>
        <fullName>Transcription factor EN 107</fullName>
    </alternativeName>
    <alternativeName>
        <fullName>bHLH transcription factor bHLH023</fullName>
    </alternativeName>
</protein>
<gene>
    <name type="primary">BHLH23</name>
    <name type="synonym">EN107</name>
    <name type="ordered locus">At4g28790</name>
    <name type="ORF">F16A16.100</name>
</gene>
<dbReference type="EMBL" id="AL035353">
    <property type="protein sequence ID" value="CAA22973.1"/>
    <property type="molecule type" value="Genomic_DNA"/>
</dbReference>
<dbReference type="EMBL" id="AL161573">
    <property type="protein sequence ID" value="CAB81467.1"/>
    <property type="molecule type" value="Genomic_DNA"/>
</dbReference>
<dbReference type="EMBL" id="CP002687">
    <property type="protein sequence ID" value="AEE85544.1"/>
    <property type="molecule type" value="Genomic_DNA"/>
</dbReference>
<dbReference type="EMBL" id="CP002687">
    <property type="protein sequence ID" value="AEE85545.1"/>
    <property type="molecule type" value="Genomic_DNA"/>
</dbReference>
<dbReference type="EMBL" id="CP002687">
    <property type="protein sequence ID" value="ANM66994.1"/>
    <property type="molecule type" value="Genomic_DNA"/>
</dbReference>
<dbReference type="EMBL" id="CP002687">
    <property type="protein sequence ID" value="ANM66996.1"/>
    <property type="molecule type" value="Genomic_DNA"/>
</dbReference>
<dbReference type="EMBL" id="CP002687">
    <property type="protein sequence ID" value="ANM66999.1"/>
    <property type="molecule type" value="Genomic_DNA"/>
</dbReference>
<dbReference type="EMBL" id="BT015828">
    <property type="protein sequence ID" value="AAU94391.1"/>
    <property type="molecule type" value="mRNA"/>
</dbReference>
<dbReference type="EMBL" id="BT020214">
    <property type="protein sequence ID" value="AAV59280.1"/>
    <property type="molecule type" value="mRNA"/>
</dbReference>
<dbReference type="PIR" id="T04520">
    <property type="entry name" value="T04520"/>
</dbReference>
<dbReference type="RefSeq" id="NP_001320083.1">
    <molecule id="Q9SVU6-1"/>
    <property type="nucleotide sequence ID" value="NM_001341933.1"/>
</dbReference>
<dbReference type="RefSeq" id="NP_001328852.1">
    <molecule id="Q9SVU6-2"/>
    <property type="nucleotide sequence ID" value="NM_001341938.1"/>
</dbReference>
<dbReference type="RefSeq" id="NP_001328854.1">
    <molecule id="Q9SVU6-2"/>
    <property type="nucleotide sequence ID" value="NM_001341936.1"/>
</dbReference>
<dbReference type="RefSeq" id="NP_001328857.1">
    <molecule id="Q9SVU6-2"/>
    <property type="nucleotide sequence ID" value="NM_001341939.1"/>
</dbReference>
<dbReference type="RefSeq" id="NP_974634.1">
    <molecule id="Q9SVU6-3"/>
    <property type="nucleotide sequence ID" value="NM_202905.1"/>
</dbReference>
<dbReference type="SMR" id="Q9SVU6"/>
<dbReference type="FunCoup" id="Q9SVU6">
    <property type="interactions" value="15"/>
</dbReference>
<dbReference type="STRING" id="3702.Q9SVU6"/>
<dbReference type="PaxDb" id="3702-AT4G28790.1"/>
<dbReference type="EnsemblPlants" id="AT4G28790.1">
    <molecule id="Q9SVU6-1"/>
    <property type="protein sequence ID" value="AT4G28790.1"/>
    <property type="gene ID" value="AT4G28790"/>
</dbReference>
<dbReference type="EnsemblPlants" id="AT4G28790.2">
    <molecule id="Q9SVU6-3"/>
    <property type="protein sequence ID" value="AT4G28790.2"/>
    <property type="gene ID" value="AT4G28790"/>
</dbReference>
<dbReference type="EnsemblPlants" id="AT4G28790.5">
    <molecule id="Q9SVU6-2"/>
    <property type="protein sequence ID" value="AT4G28790.5"/>
    <property type="gene ID" value="AT4G28790"/>
</dbReference>
<dbReference type="EnsemblPlants" id="AT4G28790.7">
    <molecule id="Q9SVU6-2"/>
    <property type="protein sequence ID" value="AT4G28790.7"/>
    <property type="gene ID" value="AT4G28790"/>
</dbReference>
<dbReference type="EnsemblPlants" id="AT4G28790.8">
    <molecule id="Q9SVU6-2"/>
    <property type="protein sequence ID" value="AT4G28790.8"/>
    <property type="gene ID" value="AT4G28790"/>
</dbReference>
<dbReference type="GeneID" id="829000"/>
<dbReference type="Gramene" id="AT4G28790.1">
    <molecule id="Q9SVU6-1"/>
    <property type="protein sequence ID" value="AT4G28790.1"/>
    <property type="gene ID" value="AT4G28790"/>
</dbReference>
<dbReference type="Gramene" id="AT4G28790.2">
    <molecule id="Q9SVU6-3"/>
    <property type="protein sequence ID" value="AT4G28790.2"/>
    <property type="gene ID" value="AT4G28790"/>
</dbReference>
<dbReference type="Gramene" id="AT4G28790.5">
    <molecule id="Q9SVU6-2"/>
    <property type="protein sequence ID" value="AT4G28790.5"/>
    <property type="gene ID" value="AT4G28790"/>
</dbReference>
<dbReference type="Gramene" id="AT4G28790.7">
    <molecule id="Q9SVU6-2"/>
    <property type="protein sequence ID" value="AT4G28790.7"/>
    <property type="gene ID" value="AT4G28790"/>
</dbReference>
<dbReference type="Gramene" id="AT4G28790.8">
    <molecule id="Q9SVU6-2"/>
    <property type="protein sequence ID" value="AT4G28790.8"/>
    <property type="gene ID" value="AT4G28790"/>
</dbReference>
<dbReference type="KEGG" id="ath:AT4G28790"/>
<dbReference type="Araport" id="AT4G28790"/>
<dbReference type="TAIR" id="AT4G28790"/>
<dbReference type="eggNOG" id="ENOG502QR6A">
    <property type="taxonomic scope" value="Eukaryota"/>
</dbReference>
<dbReference type="InParanoid" id="Q9SVU6"/>
<dbReference type="OMA" id="MHSISER"/>
<dbReference type="PhylomeDB" id="Q9SVU6"/>
<dbReference type="PRO" id="PR:Q9SVU6"/>
<dbReference type="Proteomes" id="UP000006548">
    <property type="component" value="Chromosome 4"/>
</dbReference>
<dbReference type="ExpressionAtlas" id="Q9SVU6">
    <property type="expression patterns" value="baseline and differential"/>
</dbReference>
<dbReference type="GO" id="GO:0005634">
    <property type="term" value="C:nucleus"/>
    <property type="evidence" value="ECO:0007669"/>
    <property type="project" value="UniProtKB-SubCell"/>
</dbReference>
<dbReference type="GO" id="GO:0003677">
    <property type="term" value="F:DNA binding"/>
    <property type="evidence" value="ECO:0007669"/>
    <property type="project" value="UniProtKB-KW"/>
</dbReference>
<dbReference type="GO" id="GO:0003700">
    <property type="term" value="F:DNA-binding transcription factor activity"/>
    <property type="evidence" value="ECO:0000250"/>
    <property type="project" value="TAIR"/>
</dbReference>
<dbReference type="GO" id="GO:0046983">
    <property type="term" value="F:protein dimerization activity"/>
    <property type="evidence" value="ECO:0007669"/>
    <property type="project" value="InterPro"/>
</dbReference>
<dbReference type="GO" id="GO:0006355">
    <property type="term" value="P:regulation of DNA-templated transcription"/>
    <property type="evidence" value="ECO:0000304"/>
    <property type="project" value="TAIR"/>
</dbReference>
<dbReference type="CDD" id="cd11445">
    <property type="entry name" value="bHLH_AtPIF_like"/>
    <property type="match status" value="1"/>
</dbReference>
<dbReference type="Gene3D" id="4.10.280.10">
    <property type="entry name" value="Helix-loop-helix DNA-binding domain"/>
    <property type="match status" value="1"/>
</dbReference>
<dbReference type="InterPro" id="IPR031066">
    <property type="entry name" value="bHLH_ALC-like_plant"/>
</dbReference>
<dbReference type="InterPro" id="IPR011598">
    <property type="entry name" value="bHLH_dom"/>
</dbReference>
<dbReference type="InterPro" id="IPR036638">
    <property type="entry name" value="HLH_DNA-bd_sf"/>
</dbReference>
<dbReference type="InterPro" id="IPR047265">
    <property type="entry name" value="PIF1-like_bHLH"/>
</dbReference>
<dbReference type="PANTHER" id="PTHR45855:SF21">
    <property type="entry name" value="TRANSCRIPTION FACTOR BHLH119-RELATED"/>
    <property type="match status" value="1"/>
</dbReference>
<dbReference type="PANTHER" id="PTHR45855">
    <property type="entry name" value="TRANSCRIPTION FACTOR PIF1-RELATED"/>
    <property type="match status" value="1"/>
</dbReference>
<dbReference type="Pfam" id="PF00010">
    <property type="entry name" value="HLH"/>
    <property type="match status" value="1"/>
</dbReference>
<dbReference type="SMART" id="SM00353">
    <property type="entry name" value="HLH"/>
    <property type="match status" value="1"/>
</dbReference>
<dbReference type="SUPFAM" id="SSF47459">
    <property type="entry name" value="HLH, helix-loop-helix DNA-binding domain"/>
    <property type="match status" value="1"/>
</dbReference>
<dbReference type="PROSITE" id="PS50888">
    <property type="entry name" value="BHLH"/>
    <property type="match status" value="1"/>
</dbReference>